<dbReference type="EMBL" id="FM242711">
    <property type="protein sequence ID" value="CAS06337.1"/>
    <property type="molecule type" value="Genomic_DNA"/>
</dbReference>
<dbReference type="RefSeq" id="WP_003739848.1">
    <property type="nucleotide sequence ID" value="NC_012488.1"/>
</dbReference>
<dbReference type="SMR" id="C1KZG4"/>
<dbReference type="GeneID" id="93240497"/>
<dbReference type="KEGG" id="lmc:Lm4b_02583"/>
<dbReference type="HOGENOM" id="CLU_098841_0_1_9"/>
<dbReference type="GO" id="GO:0022625">
    <property type="term" value="C:cytosolic large ribosomal subunit"/>
    <property type="evidence" value="ECO:0007669"/>
    <property type="project" value="TreeGrafter"/>
</dbReference>
<dbReference type="GO" id="GO:0008097">
    <property type="term" value="F:5S rRNA binding"/>
    <property type="evidence" value="ECO:0007669"/>
    <property type="project" value="TreeGrafter"/>
</dbReference>
<dbReference type="GO" id="GO:0003735">
    <property type="term" value="F:structural constituent of ribosome"/>
    <property type="evidence" value="ECO:0007669"/>
    <property type="project" value="InterPro"/>
</dbReference>
<dbReference type="GO" id="GO:0006412">
    <property type="term" value="P:translation"/>
    <property type="evidence" value="ECO:0007669"/>
    <property type="project" value="UniProtKB-UniRule"/>
</dbReference>
<dbReference type="CDD" id="cd00432">
    <property type="entry name" value="Ribosomal_L18_L5e"/>
    <property type="match status" value="1"/>
</dbReference>
<dbReference type="FunFam" id="3.30.420.100:FF:000001">
    <property type="entry name" value="50S ribosomal protein L18"/>
    <property type="match status" value="1"/>
</dbReference>
<dbReference type="Gene3D" id="3.30.420.100">
    <property type="match status" value="1"/>
</dbReference>
<dbReference type="HAMAP" id="MF_01337_B">
    <property type="entry name" value="Ribosomal_uL18_B"/>
    <property type="match status" value="1"/>
</dbReference>
<dbReference type="InterPro" id="IPR004389">
    <property type="entry name" value="Ribosomal_uL18_bac-type"/>
</dbReference>
<dbReference type="InterPro" id="IPR005484">
    <property type="entry name" value="Ribosomal_uL18_bac/euk"/>
</dbReference>
<dbReference type="NCBIfam" id="TIGR00060">
    <property type="entry name" value="L18_bact"/>
    <property type="match status" value="1"/>
</dbReference>
<dbReference type="PANTHER" id="PTHR12899">
    <property type="entry name" value="39S RIBOSOMAL PROTEIN L18, MITOCHONDRIAL"/>
    <property type="match status" value="1"/>
</dbReference>
<dbReference type="PANTHER" id="PTHR12899:SF3">
    <property type="entry name" value="LARGE RIBOSOMAL SUBUNIT PROTEIN UL18M"/>
    <property type="match status" value="1"/>
</dbReference>
<dbReference type="Pfam" id="PF00861">
    <property type="entry name" value="Ribosomal_L18p"/>
    <property type="match status" value="1"/>
</dbReference>
<dbReference type="SUPFAM" id="SSF53137">
    <property type="entry name" value="Translational machinery components"/>
    <property type="match status" value="1"/>
</dbReference>
<evidence type="ECO:0000255" key="1">
    <source>
        <dbReference type="HAMAP-Rule" id="MF_01337"/>
    </source>
</evidence>
<evidence type="ECO:0000256" key="2">
    <source>
        <dbReference type="SAM" id="MobiDB-lite"/>
    </source>
</evidence>
<evidence type="ECO:0000305" key="3"/>
<feature type="chain" id="PRO_1000214678" description="Large ribosomal subunit protein uL18">
    <location>
        <begin position="1"/>
        <end position="119"/>
    </location>
</feature>
<feature type="region of interest" description="Disordered" evidence="2">
    <location>
        <begin position="1"/>
        <end position="25"/>
    </location>
</feature>
<feature type="compositionally biased region" description="Basic residues" evidence="2">
    <location>
        <begin position="9"/>
        <end position="20"/>
    </location>
</feature>
<accession>C1KZG4</accession>
<sequence length="119" mass="13096">MITKIDKNKVRKKRHARVRSKISGTESRPRLNVFRSNKNIYAQIIDDVNGVTLASASNLDKDFGSAESKVDAASKVGELVAKRASEKGITSVTFDRGGYLYHGRVKALAEAARENGLEF</sequence>
<proteinExistence type="inferred from homology"/>
<reference key="1">
    <citation type="journal article" date="2012" name="BMC Genomics">
        <title>Comparative genomics and transcriptomics of lineages I, II, and III strains of Listeria monocytogenes.</title>
        <authorList>
            <person name="Hain T."/>
            <person name="Ghai R."/>
            <person name="Billion A."/>
            <person name="Kuenne C.T."/>
            <person name="Steinweg C."/>
            <person name="Izar B."/>
            <person name="Mohamed W."/>
            <person name="Mraheil M."/>
            <person name="Domann E."/>
            <person name="Schaffrath S."/>
            <person name="Karst U."/>
            <person name="Goesmann A."/>
            <person name="Oehm S."/>
            <person name="Puhler A."/>
            <person name="Merkl R."/>
            <person name="Vorwerk S."/>
            <person name="Glaser P."/>
            <person name="Garrido P."/>
            <person name="Rusniok C."/>
            <person name="Buchrieser C."/>
            <person name="Goebel W."/>
            <person name="Chakraborty T."/>
        </authorList>
    </citation>
    <scope>NUCLEOTIDE SEQUENCE [LARGE SCALE GENOMIC DNA]</scope>
    <source>
        <strain>CLIP80459</strain>
    </source>
</reference>
<comment type="function">
    <text evidence="1">This is one of the proteins that bind and probably mediate the attachment of the 5S RNA into the large ribosomal subunit, where it forms part of the central protuberance.</text>
</comment>
<comment type="subunit">
    <text evidence="1">Part of the 50S ribosomal subunit; part of the 5S rRNA/L5/L18/L25 subcomplex. Contacts the 5S and 23S rRNAs.</text>
</comment>
<comment type="similarity">
    <text evidence="1">Belongs to the universal ribosomal protein uL18 family.</text>
</comment>
<gene>
    <name evidence="1" type="primary">rplR</name>
    <name type="ordered locus">Lm4b_02583</name>
</gene>
<keyword id="KW-0687">Ribonucleoprotein</keyword>
<keyword id="KW-0689">Ribosomal protein</keyword>
<keyword id="KW-0694">RNA-binding</keyword>
<keyword id="KW-0699">rRNA-binding</keyword>
<name>RL18_LISMC</name>
<protein>
    <recommendedName>
        <fullName evidence="1">Large ribosomal subunit protein uL18</fullName>
    </recommendedName>
    <alternativeName>
        <fullName evidence="3">50S ribosomal protein L18</fullName>
    </alternativeName>
</protein>
<organism>
    <name type="scientific">Listeria monocytogenes serotype 4b (strain CLIP80459)</name>
    <dbReference type="NCBI Taxonomy" id="568819"/>
    <lineage>
        <taxon>Bacteria</taxon>
        <taxon>Bacillati</taxon>
        <taxon>Bacillota</taxon>
        <taxon>Bacilli</taxon>
        <taxon>Bacillales</taxon>
        <taxon>Listeriaceae</taxon>
        <taxon>Listeria</taxon>
    </lineage>
</organism>